<gene>
    <name evidence="1" type="primary">epd</name>
    <name type="ordered locus">PC1_3702</name>
</gene>
<keyword id="KW-0963">Cytoplasm</keyword>
<keyword id="KW-0520">NAD</keyword>
<keyword id="KW-0560">Oxidoreductase</keyword>
<keyword id="KW-0664">Pyridoxine biosynthesis</keyword>
<organism>
    <name type="scientific">Pectobacterium carotovorum subsp. carotovorum (strain PC1)</name>
    <dbReference type="NCBI Taxonomy" id="561230"/>
    <lineage>
        <taxon>Bacteria</taxon>
        <taxon>Pseudomonadati</taxon>
        <taxon>Pseudomonadota</taxon>
        <taxon>Gammaproteobacteria</taxon>
        <taxon>Enterobacterales</taxon>
        <taxon>Pectobacteriaceae</taxon>
        <taxon>Pectobacterium</taxon>
    </lineage>
</organism>
<feature type="chain" id="PRO_1000215825" description="D-erythrose-4-phosphate dehydrogenase">
    <location>
        <begin position="1"/>
        <end position="338"/>
    </location>
</feature>
<feature type="active site" description="Nucleophile" evidence="1">
    <location>
        <position position="155"/>
    </location>
</feature>
<feature type="binding site" evidence="1">
    <location>
        <begin position="12"/>
        <end position="13"/>
    </location>
    <ligand>
        <name>NAD(+)</name>
        <dbReference type="ChEBI" id="CHEBI:57540"/>
    </ligand>
</feature>
<feature type="binding site" evidence="1">
    <location>
        <begin position="154"/>
        <end position="156"/>
    </location>
    <ligand>
        <name>substrate</name>
    </ligand>
</feature>
<feature type="binding site" evidence="1">
    <location>
        <position position="200"/>
    </location>
    <ligand>
        <name>substrate</name>
    </ligand>
</feature>
<feature type="binding site" evidence="1">
    <location>
        <begin position="213"/>
        <end position="214"/>
    </location>
    <ligand>
        <name>substrate</name>
    </ligand>
</feature>
<feature type="binding site" evidence="1">
    <location>
        <position position="236"/>
    </location>
    <ligand>
        <name>substrate</name>
    </ligand>
</feature>
<feature type="binding site" evidence="1">
    <location>
        <position position="318"/>
    </location>
    <ligand>
        <name>NAD(+)</name>
        <dbReference type="ChEBI" id="CHEBI:57540"/>
    </ligand>
</feature>
<feature type="site" description="Activates thiol group during catalysis" evidence="1">
    <location>
        <position position="182"/>
    </location>
</feature>
<name>E4PD_PECCP</name>
<dbReference type="EC" id="1.2.1.72" evidence="1"/>
<dbReference type="EMBL" id="CP001657">
    <property type="protein sequence ID" value="ACT14717.1"/>
    <property type="molecule type" value="Genomic_DNA"/>
</dbReference>
<dbReference type="RefSeq" id="WP_015841831.1">
    <property type="nucleotide sequence ID" value="NC_012917.1"/>
</dbReference>
<dbReference type="SMR" id="C6DFH8"/>
<dbReference type="STRING" id="561230.PC1_3702"/>
<dbReference type="GeneID" id="67792488"/>
<dbReference type="KEGG" id="pct:PC1_3702"/>
<dbReference type="eggNOG" id="COG0057">
    <property type="taxonomic scope" value="Bacteria"/>
</dbReference>
<dbReference type="HOGENOM" id="CLU_030140_0_0_6"/>
<dbReference type="OrthoDB" id="9803304at2"/>
<dbReference type="UniPathway" id="UPA00244">
    <property type="reaction ID" value="UER00309"/>
</dbReference>
<dbReference type="Proteomes" id="UP000002736">
    <property type="component" value="Chromosome"/>
</dbReference>
<dbReference type="GO" id="GO:0005737">
    <property type="term" value="C:cytoplasm"/>
    <property type="evidence" value="ECO:0007669"/>
    <property type="project" value="UniProtKB-SubCell"/>
</dbReference>
<dbReference type="GO" id="GO:0048001">
    <property type="term" value="F:erythrose-4-phosphate dehydrogenase activity"/>
    <property type="evidence" value="ECO:0007669"/>
    <property type="project" value="UniProtKB-UniRule"/>
</dbReference>
<dbReference type="GO" id="GO:0051287">
    <property type="term" value="F:NAD binding"/>
    <property type="evidence" value="ECO:0007669"/>
    <property type="project" value="InterPro"/>
</dbReference>
<dbReference type="GO" id="GO:0042823">
    <property type="term" value="P:pyridoxal phosphate biosynthetic process"/>
    <property type="evidence" value="ECO:0007669"/>
    <property type="project" value="UniProtKB-UniRule"/>
</dbReference>
<dbReference type="GO" id="GO:0008615">
    <property type="term" value="P:pyridoxine biosynthetic process"/>
    <property type="evidence" value="ECO:0007669"/>
    <property type="project" value="UniProtKB-UniRule"/>
</dbReference>
<dbReference type="CDD" id="cd23937">
    <property type="entry name" value="GAPDH_C_E4PDH"/>
    <property type="match status" value="1"/>
</dbReference>
<dbReference type="CDD" id="cd17892">
    <property type="entry name" value="GAPDH_N_E4PDH"/>
    <property type="match status" value="1"/>
</dbReference>
<dbReference type="FunFam" id="3.30.360.10:FF:000007">
    <property type="entry name" value="D-erythrose-4-phosphate dehydrogenase"/>
    <property type="match status" value="1"/>
</dbReference>
<dbReference type="FunFam" id="3.40.50.720:FF:000001">
    <property type="entry name" value="Glyceraldehyde-3-phosphate dehydrogenase"/>
    <property type="match status" value="1"/>
</dbReference>
<dbReference type="Gene3D" id="3.30.360.10">
    <property type="entry name" value="Dihydrodipicolinate Reductase, domain 2"/>
    <property type="match status" value="1"/>
</dbReference>
<dbReference type="Gene3D" id="3.40.50.720">
    <property type="entry name" value="NAD(P)-binding Rossmann-like Domain"/>
    <property type="match status" value="1"/>
</dbReference>
<dbReference type="HAMAP" id="MF_01640">
    <property type="entry name" value="E4P_dehydrog"/>
    <property type="match status" value="1"/>
</dbReference>
<dbReference type="InterPro" id="IPR006422">
    <property type="entry name" value="E4P_DH_bac"/>
</dbReference>
<dbReference type="InterPro" id="IPR020831">
    <property type="entry name" value="GlycerAld/Erythrose_P_DH"/>
</dbReference>
<dbReference type="InterPro" id="IPR020830">
    <property type="entry name" value="GlycerAld_3-P_DH_AS"/>
</dbReference>
<dbReference type="InterPro" id="IPR020829">
    <property type="entry name" value="GlycerAld_3-P_DH_cat"/>
</dbReference>
<dbReference type="InterPro" id="IPR020828">
    <property type="entry name" value="GlycerAld_3-P_DH_NAD(P)-bd"/>
</dbReference>
<dbReference type="InterPro" id="IPR036291">
    <property type="entry name" value="NAD(P)-bd_dom_sf"/>
</dbReference>
<dbReference type="NCBIfam" id="TIGR01532">
    <property type="entry name" value="E4PD_g-proteo"/>
    <property type="match status" value="1"/>
</dbReference>
<dbReference type="NCBIfam" id="NF010058">
    <property type="entry name" value="PRK13535.1"/>
    <property type="match status" value="1"/>
</dbReference>
<dbReference type="PANTHER" id="PTHR43148">
    <property type="entry name" value="GLYCERALDEHYDE-3-PHOSPHATE DEHYDROGENASE 2"/>
    <property type="match status" value="1"/>
</dbReference>
<dbReference type="Pfam" id="PF02800">
    <property type="entry name" value="Gp_dh_C"/>
    <property type="match status" value="1"/>
</dbReference>
<dbReference type="Pfam" id="PF00044">
    <property type="entry name" value="Gp_dh_N"/>
    <property type="match status" value="1"/>
</dbReference>
<dbReference type="PIRSF" id="PIRSF000149">
    <property type="entry name" value="GAP_DH"/>
    <property type="match status" value="1"/>
</dbReference>
<dbReference type="PRINTS" id="PR00078">
    <property type="entry name" value="G3PDHDRGNASE"/>
</dbReference>
<dbReference type="SMART" id="SM00846">
    <property type="entry name" value="Gp_dh_N"/>
    <property type="match status" value="1"/>
</dbReference>
<dbReference type="SUPFAM" id="SSF55347">
    <property type="entry name" value="Glyceraldehyde-3-phosphate dehydrogenase-like, C-terminal domain"/>
    <property type="match status" value="1"/>
</dbReference>
<dbReference type="SUPFAM" id="SSF51735">
    <property type="entry name" value="NAD(P)-binding Rossmann-fold domains"/>
    <property type="match status" value="1"/>
</dbReference>
<dbReference type="PROSITE" id="PS00071">
    <property type="entry name" value="GAPDH"/>
    <property type="match status" value="1"/>
</dbReference>
<reference key="1">
    <citation type="submission" date="2009-07" db="EMBL/GenBank/DDBJ databases">
        <title>Complete sequence of Pectobacterium carotovorum subsp. carotovorum PC1.</title>
        <authorList>
            <consortium name="US DOE Joint Genome Institute"/>
            <person name="Lucas S."/>
            <person name="Copeland A."/>
            <person name="Lapidus A."/>
            <person name="Glavina del Rio T."/>
            <person name="Tice H."/>
            <person name="Bruce D."/>
            <person name="Goodwin L."/>
            <person name="Pitluck S."/>
            <person name="Munk A.C."/>
            <person name="Brettin T."/>
            <person name="Detter J.C."/>
            <person name="Han C."/>
            <person name="Tapia R."/>
            <person name="Larimer F."/>
            <person name="Land M."/>
            <person name="Hauser L."/>
            <person name="Kyrpides N."/>
            <person name="Mikhailova N."/>
            <person name="Balakrishnan V."/>
            <person name="Glasner J."/>
            <person name="Perna N.T."/>
        </authorList>
    </citation>
    <scope>NUCLEOTIDE SEQUENCE [LARGE SCALE GENOMIC DNA]</scope>
    <source>
        <strain>PC1</strain>
    </source>
</reference>
<comment type="function">
    <text evidence="1">Catalyzes the NAD-dependent conversion of D-erythrose 4-phosphate to 4-phosphoerythronate.</text>
</comment>
<comment type="catalytic activity">
    <reaction evidence="1">
        <text>D-erythrose 4-phosphate + NAD(+) + H2O = 4-phospho-D-erythronate + NADH + 2 H(+)</text>
        <dbReference type="Rhea" id="RHEA:12056"/>
        <dbReference type="ChEBI" id="CHEBI:15377"/>
        <dbReference type="ChEBI" id="CHEBI:15378"/>
        <dbReference type="ChEBI" id="CHEBI:16897"/>
        <dbReference type="ChEBI" id="CHEBI:57540"/>
        <dbReference type="ChEBI" id="CHEBI:57945"/>
        <dbReference type="ChEBI" id="CHEBI:58766"/>
        <dbReference type="EC" id="1.2.1.72"/>
    </reaction>
</comment>
<comment type="pathway">
    <text evidence="1">Cofactor biosynthesis; pyridoxine 5'-phosphate biosynthesis; pyridoxine 5'-phosphate from D-erythrose 4-phosphate: step 1/5.</text>
</comment>
<comment type="subunit">
    <text evidence="1">Homotetramer.</text>
</comment>
<comment type="subcellular location">
    <subcellularLocation>
        <location evidence="1">Cytoplasm</location>
    </subcellularLocation>
</comment>
<comment type="similarity">
    <text evidence="1">Belongs to the glyceraldehyde-3-phosphate dehydrogenase family. Epd subfamily.</text>
</comment>
<proteinExistence type="inferred from homology"/>
<sequence length="338" mass="37272">MTIRIAINGFGRIGRSVLRALYESGRRAEITVVAINELASAEGMAHLLKYDSSHGRFSWDVRQECDQLYVGDDCIRLLHQAEIQALPWRELGVDIVLDCSGVYGSREDGEAHLAAGAKKVLFSHPGTADLDATVVFGVNHQQLEREHRIVSNASCTTNCIIPVIKLLDDAFGIENGTVTTIHSSMNDQPVIDAYHHDLRRTRAASQSIIPVDTKLSAGITRIFPQFVDRFEAISVRVPTINVTAIDLSVSVRKAVNVNEINALLQKSAHESFRGIVDYTELPLVSADFNHDPHSAIVDGTQTRVSGQHLIKTLVWCDNEWGFANRMLDTTRAMAACGF</sequence>
<accession>C6DFH8</accession>
<evidence type="ECO:0000255" key="1">
    <source>
        <dbReference type="HAMAP-Rule" id="MF_01640"/>
    </source>
</evidence>
<protein>
    <recommendedName>
        <fullName evidence="1">D-erythrose-4-phosphate dehydrogenase</fullName>
        <shortName evidence="1">E4PDH</shortName>
        <ecNumber evidence="1">1.2.1.72</ecNumber>
    </recommendedName>
</protein>